<feature type="chain" id="PRO_1000140302" description="HTH-type transcriptional repressor PurR">
    <location>
        <begin position="1"/>
        <end position="341"/>
    </location>
</feature>
<feature type="domain" description="HTH lacI-type" evidence="1">
    <location>
        <begin position="2"/>
        <end position="56"/>
    </location>
</feature>
<feature type="DNA-binding region" description="H-T-H motif" evidence="1">
    <location>
        <begin position="4"/>
        <end position="23"/>
    </location>
</feature>
<feature type="DNA-binding region" evidence="1">
    <location>
        <begin position="48"/>
        <end position="56"/>
    </location>
</feature>
<feature type="binding site" evidence="1">
    <location>
        <position position="73"/>
    </location>
    <ligand>
        <name>hypoxanthine</name>
        <dbReference type="ChEBI" id="CHEBI:17368"/>
    </ligand>
</feature>
<feature type="binding site" evidence="1">
    <location>
        <position position="190"/>
    </location>
    <ligand>
        <name>hypoxanthine</name>
        <dbReference type="ChEBI" id="CHEBI:17368"/>
    </ligand>
</feature>
<feature type="binding site" evidence="1">
    <location>
        <position position="192"/>
    </location>
    <ligand>
        <name>hypoxanthine</name>
        <dbReference type="ChEBI" id="CHEBI:17368"/>
    </ligand>
</feature>
<feature type="binding site" evidence="1">
    <location>
        <position position="221"/>
    </location>
    <ligand>
        <name>hypoxanthine</name>
        <dbReference type="ChEBI" id="CHEBI:17368"/>
    </ligand>
</feature>
<feature type="binding site" evidence="1">
    <location>
        <position position="275"/>
    </location>
    <ligand>
        <name>hypoxanthine</name>
        <dbReference type="ChEBI" id="CHEBI:17368"/>
    </ligand>
</feature>
<protein>
    <recommendedName>
        <fullName evidence="1">HTH-type transcriptional repressor PurR</fullName>
    </recommendedName>
    <alternativeName>
        <fullName evidence="1">Pur regulon repressor</fullName>
    </alternativeName>
    <alternativeName>
        <fullName evidence="1">Purine nucleotide synthesis repressor</fullName>
    </alternativeName>
</protein>
<dbReference type="EMBL" id="CP001113">
    <property type="protein sequence ID" value="ACF62780.1"/>
    <property type="molecule type" value="Genomic_DNA"/>
</dbReference>
<dbReference type="RefSeq" id="WP_000190992.1">
    <property type="nucleotide sequence ID" value="NZ_CCMR01000003.1"/>
</dbReference>
<dbReference type="SMR" id="B4T567"/>
<dbReference type="KEGG" id="see:SNSL254_A1540"/>
<dbReference type="HOGENOM" id="CLU_037628_6_2_6"/>
<dbReference type="UniPathway" id="UPA00488"/>
<dbReference type="Proteomes" id="UP000008824">
    <property type="component" value="Chromosome"/>
</dbReference>
<dbReference type="GO" id="GO:0003700">
    <property type="term" value="F:DNA-binding transcription factor activity"/>
    <property type="evidence" value="ECO:0007669"/>
    <property type="project" value="TreeGrafter"/>
</dbReference>
<dbReference type="GO" id="GO:0000976">
    <property type="term" value="F:transcription cis-regulatory region binding"/>
    <property type="evidence" value="ECO:0007669"/>
    <property type="project" value="TreeGrafter"/>
</dbReference>
<dbReference type="GO" id="GO:0045892">
    <property type="term" value="P:negative regulation of DNA-templated transcription"/>
    <property type="evidence" value="ECO:0007669"/>
    <property type="project" value="UniProtKB-UniRule"/>
</dbReference>
<dbReference type="GO" id="GO:0006164">
    <property type="term" value="P:purine nucleotide biosynthetic process"/>
    <property type="evidence" value="ECO:0007669"/>
    <property type="project" value="UniProtKB-UniPathway"/>
</dbReference>
<dbReference type="CDD" id="cd01392">
    <property type="entry name" value="HTH_LacI"/>
    <property type="match status" value="1"/>
</dbReference>
<dbReference type="CDD" id="cd06275">
    <property type="entry name" value="PBP1_PurR"/>
    <property type="match status" value="1"/>
</dbReference>
<dbReference type="FunFam" id="1.10.260.40:FF:000002">
    <property type="entry name" value="HTH-type transcriptional repressor PurR"/>
    <property type="match status" value="1"/>
</dbReference>
<dbReference type="FunFam" id="3.40.50.2300:FF:000045">
    <property type="entry name" value="HTH-type transcriptional repressor PurR"/>
    <property type="match status" value="1"/>
</dbReference>
<dbReference type="Gene3D" id="3.40.50.2300">
    <property type="match status" value="2"/>
</dbReference>
<dbReference type="Gene3D" id="1.10.260.40">
    <property type="entry name" value="lambda repressor-like DNA-binding domains"/>
    <property type="match status" value="1"/>
</dbReference>
<dbReference type="HAMAP" id="MF_01277">
    <property type="entry name" value="HTH_type_PurR"/>
    <property type="match status" value="1"/>
</dbReference>
<dbReference type="InterPro" id="IPR000843">
    <property type="entry name" value="HTH_LacI"/>
</dbReference>
<dbReference type="InterPro" id="IPR046335">
    <property type="entry name" value="LacI/GalR-like_sensor"/>
</dbReference>
<dbReference type="InterPro" id="IPR010982">
    <property type="entry name" value="Lambda_DNA-bd_dom_sf"/>
</dbReference>
<dbReference type="InterPro" id="IPR028082">
    <property type="entry name" value="Peripla_BP_I"/>
</dbReference>
<dbReference type="InterPro" id="IPR023588">
    <property type="entry name" value="Tscrpt_reg_HTH_PurR"/>
</dbReference>
<dbReference type="NCBIfam" id="NF007979">
    <property type="entry name" value="PRK10703.1"/>
    <property type="match status" value="1"/>
</dbReference>
<dbReference type="PANTHER" id="PTHR30146:SF148">
    <property type="entry name" value="HTH-TYPE TRANSCRIPTIONAL REPRESSOR PURR-RELATED"/>
    <property type="match status" value="1"/>
</dbReference>
<dbReference type="PANTHER" id="PTHR30146">
    <property type="entry name" value="LACI-RELATED TRANSCRIPTIONAL REPRESSOR"/>
    <property type="match status" value="1"/>
</dbReference>
<dbReference type="Pfam" id="PF00356">
    <property type="entry name" value="LacI"/>
    <property type="match status" value="1"/>
</dbReference>
<dbReference type="Pfam" id="PF13377">
    <property type="entry name" value="Peripla_BP_3"/>
    <property type="match status" value="1"/>
</dbReference>
<dbReference type="PRINTS" id="PR00036">
    <property type="entry name" value="HTHLACI"/>
</dbReference>
<dbReference type="SMART" id="SM00354">
    <property type="entry name" value="HTH_LACI"/>
    <property type="match status" value="1"/>
</dbReference>
<dbReference type="SUPFAM" id="SSF47413">
    <property type="entry name" value="lambda repressor-like DNA-binding domains"/>
    <property type="match status" value="1"/>
</dbReference>
<dbReference type="SUPFAM" id="SSF53822">
    <property type="entry name" value="Periplasmic binding protein-like I"/>
    <property type="match status" value="1"/>
</dbReference>
<dbReference type="PROSITE" id="PS00356">
    <property type="entry name" value="HTH_LACI_1"/>
    <property type="match status" value="1"/>
</dbReference>
<dbReference type="PROSITE" id="PS50932">
    <property type="entry name" value="HTH_LACI_2"/>
    <property type="match status" value="1"/>
</dbReference>
<sequence>MATIKDVAKRANVSTTTVSHVINKTRFVAEETRNAVWAAIKELHYSPSAVARSLKVNHTKSIGLLATSSEAAYFAEIIEAVEKNCFQKGYTLILGNAWNNLEKQRAYLSMMAQKRVDGLLVMCSEYPEPLLSMLEEYRHIPMVVMDWGEAKADFTDTVIDNAFAGGYMAGRYLVERGHRDIGVIPGPLERNTGAGRLAGFMKAMEEALINVPDNWIVQGDFEPESGYHAMQQILSQSHRPTAVFCGGDIMAMGALCAADEMGLRVPQDVSVIGYDNVRNARFFTPALTTIHQPKDSLGETAFNMLLDRIVNKREESQSIEVHPRLVERRSVADGPFRDYRR</sequence>
<gene>
    <name evidence="1" type="primary">purR</name>
    <name type="ordered locus">SNSL254_A1540</name>
</gene>
<comment type="function">
    <text evidence="1">Is the main repressor of the genes involved in the de novo synthesis of purine nucleotides, regulating purB, purC, purEK, purF, purHD, purL, purMN and guaBA expression. PurR is allosterically activated to bind its cognate DNA by binding the purine corepressors, hypoxanthine or guanine, thereby effecting transcription repression.</text>
</comment>
<comment type="pathway">
    <text>Purine metabolism; purine nucleotide biosynthesis [regulation].</text>
</comment>
<comment type="subunit">
    <text evidence="1">Homodimer.</text>
</comment>
<comment type="domain">
    <text evidence="1">Consists of two structural and functional domains: an N-terminal DNA-binding domain, approximately the first 60 residues, and a larger C-terminal domain, approximately 280 residues, which imparts the function of corepressor binding and oligomerization.</text>
</comment>
<reference key="1">
    <citation type="journal article" date="2011" name="J. Bacteriol.">
        <title>Comparative genomics of 28 Salmonella enterica isolates: evidence for CRISPR-mediated adaptive sublineage evolution.</title>
        <authorList>
            <person name="Fricke W.F."/>
            <person name="Mammel M.K."/>
            <person name="McDermott P.F."/>
            <person name="Tartera C."/>
            <person name="White D.G."/>
            <person name="Leclerc J.E."/>
            <person name="Ravel J."/>
            <person name="Cebula T.A."/>
        </authorList>
    </citation>
    <scope>NUCLEOTIDE SEQUENCE [LARGE SCALE GENOMIC DNA]</scope>
    <source>
        <strain>SL254</strain>
    </source>
</reference>
<organism>
    <name type="scientific">Salmonella newport (strain SL254)</name>
    <dbReference type="NCBI Taxonomy" id="423368"/>
    <lineage>
        <taxon>Bacteria</taxon>
        <taxon>Pseudomonadati</taxon>
        <taxon>Pseudomonadota</taxon>
        <taxon>Gammaproteobacteria</taxon>
        <taxon>Enterobacterales</taxon>
        <taxon>Enterobacteriaceae</taxon>
        <taxon>Salmonella</taxon>
    </lineage>
</organism>
<evidence type="ECO:0000255" key="1">
    <source>
        <dbReference type="HAMAP-Rule" id="MF_01277"/>
    </source>
</evidence>
<name>PURR_SALNS</name>
<accession>B4T567</accession>
<keyword id="KW-0238">DNA-binding</keyword>
<keyword id="KW-0658">Purine biosynthesis</keyword>
<keyword id="KW-0678">Repressor</keyword>
<keyword id="KW-0804">Transcription</keyword>
<keyword id="KW-0805">Transcription regulation</keyword>
<proteinExistence type="inferred from homology"/>